<organism>
    <name type="scientific">Bos taurus</name>
    <name type="common">Bovine</name>
    <dbReference type="NCBI Taxonomy" id="9913"/>
    <lineage>
        <taxon>Eukaryota</taxon>
        <taxon>Metazoa</taxon>
        <taxon>Chordata</taxon>
        <taxon>Craniata</taxon>
        <taxon>Vertebrata</taxon>
        <taxon>Euteleostomi</taxon>
        <taxon>Mammalia</taxon>
        <taxon>Eutheria</taxon>
        <taxon>Laurasiatheria</taxon>
        <taxon>Artiodactyla</taxon>
        <taxon>Ruminantia</taxon>
        <taxon>Pecora</taxon>
        <taxon>Bovidae</taxon>
        <taxon>Bovinae</taxon>
        <taxon>Bos</taxon>
    </lineage>
</organism>
<evidence type="ECO:0000250" key="1"/>
<evidence type="ECO:0000250" key="2">
    <source>
        <dbReference type="UniProtKB" id="Q60809"/>
    </source>
</evidence>
<evidence type="ECO:0000250" key="3">
    <source>
        <dbReference type="UniProtKB" id="Q9UIV1"/>
    </source>
</evidence>
<evidence type="ECO:0000255" key="4"/>
<evidence type="ECO:0000305" key="5"/>
<name>CNOT7_BOVIN</name>
<feature type="chain" id="PRO_0000313893" description="CCR4-NOT transcription complex subunit 7">
    <location>
        <begin position="1"/>
        <end position="285"/>
    </location>
</feature>
<feature type="binding site" evidence="1">
    <location>
        <position position="40"/>
    </location>
    <ligand>
        <name>a divalent metal cation</name>
        <dbReference type="ChEBI" id="CHEBI:60240"/>
        <label>1</label>
        <note>catalytic</note>
    </ligand>
</feature>
<feature type="binding site" evidence="1">
    <location>
        <position position="40"/>
    </location>
    <ligand>
        <name>a divalent metal cation</name>
        <dbReference type="ChEBI" id="CHEBI:60240"/>
        <label>2</label>
        <note>catalytic</note>
    </ligand>
</feature>
<feature type="binding site" evidence="4">
    <location>
        <position position="42"/>
    </location>
    <ligand>
        <name>a divalent metal cation</name>
        <dbReference type="ChEBI" id="CHEBI:60240"/>
        <label>2</label>
        <note>catalytic</note>
    </ligand>
</feature>
<feature type="binding site" evidence="1">
    <location>
        <position position="161"/>
    </location>
    <ligand>
        <name>a divalent metal cation</name>
        <dbReference type="ChEBI" id="CHEBI:60240"/>
        <label>1</label>
        <note>catalytic</note>
    </ligand>
</feature>
<feature type="binding site" evidence="1">
    <location>
        <position position="230"/>
    </location>
    <ligand>
        <name>a divalent metal cation</name>
        <dbReference type="ChEBI" id="CHEBI:60240"/>
        <label>2</label>
        <note>catalytic</note>
    </ligand>
</feature>
<feature type="binding site" evidence="4">
    <location>
        <position position="278"/>
    </location>
    <ligand>
        <name>a divalent metal cation</name>
        <dbReference type="ChEBI" id="CHEBI:60240"/>
        <label>1</label>
        <note>catalytic</note>
    </ligand>
</feature>
<proteinExistence type="evidence at transcript level"/>
<sequence>MPAATVDHSQRICEVWACNLDEEMKKIRQVIRKYNYVAMDTEFPGVVARPIGEFRSNADYQYQLLRCNVDLLKIIQLGLTFMNEQGEYPPGTSTWQFNFKFNLTEDMYAQDSIELLTTSGIQFKKHEEEGIETQYFAELLMTSGVVLCEGVKWLSFHSGYDFGYLIKILTNSNLPEEELDFFEILRLFFPVIYDVKYLMKSCKNLKGGLQEVAEQLELERIGPQHQAGSDSLLTGMAFFKMREMFFEDHIDDAKYCGHLYGLGSGSSYVQNGTGNAYEEEASKQS</sequence>
<reference key="1">
    <citation type="submission" date="2005-08" db="EMBL/GenBank/DDBJ databases">
        <authorList>
            <consortium name="NIH - Mammalian Gene Collection (MGC) project"/>
        </authorList>
    </citation>
    <scope>NUCLEOTIDE SEQUENCE [LARGE SCALE MRNA]</scope>
    <source>
        <strain>Hereford</strain>
        <tissue>Thymus</tissue>
    </source>
</reference>
<comment type="function">
    <text evidence="3">Has 3'-5' poly(A) exoribonuclease activity for synthetic poly(A) RNA substrate. Its function seems to be partially redundant with that of CNOT8. Catalytic component of the CCR4-NOT complex which is one of the major cellular mRNA deadenylases and is linked to various cellular processes including bulk mRNA degradation, miRNA-mediated repression, translational repression during translational initiation and general transcription regulation. During miRNA-mediated repression the complex also seems to act as translational repressor during translational initiation. Additional complex functions may be a consequence of its influence on mRNA expression. Required for miRNA-mediated mRNA deadenylation. Associates with members of the BTG family such as TOB1 and BTG2 and is required for their anti-proliferative activity (By similarity).</text>
</comment>
<comment type="catalytic activity">
    <reaction evidence="3">
        <text>Exonucleolytic cleavage of poly(A) to 5'-AMP.</text>
        <dbReference type="EC" id="3.1.13.4"/>
    </reaction>
</comment>
<comment type="cofactor">
    <cofactor evidence="3">
        <name>Mn(2+)</name>
        <dbReference type="ChEBI" id="CHEBI:29035"/>
    </cofactor>
    <cofactor evidence="3">
        <name>Mg(2+)</name>
        <dbReference type="ChEBI" id="CHEBI:18420"/>
    </cofactor>
    <cofactor evidence="3">
        <name>Co(2+)</name>
        <dbReference type="ChEBI" id="CHEBI:48828"/>
    </cofactor>
    <text evidence="3">Binds 2 divalent metal cations per subunit with RNAase activity being higher in presence of Mn(2+) than of Mg(2+) or Co(2+).</text>
</comment>
<comment type="subunit">
    <text evidence="2 3">Component of the CCR4-NOT complex; distinct complexes seem to exist that differ in the participation of probably mutually exclusive catalytic subunits; the complex contains two deadenylase subunits, CNOT6 or CNOT6L, and CNOT7 or CNOT8. In the complex, interacts directly with CNOT1. Interacts with AGO2. Interacts with TOB1; recruited by TOB1 to a ternary complex with CPEB3 which is required for mRNA deadenylation and decay. Interacts with BTG1. Interacts with BTG2. Interacts with NANOS2. Interacts with ZFP36, ZFP36L1 and ZFP36L2; these interactions are inhibited in response to phorbol 12-myristate 13-acetate (PMA) treatment in a p38 MAPK-dependent manner. Interacts with BTG4 (By similarity). Interacts with EIF4E; this interaction is increased by CNOT7 interaction with BTG4 (By similarity).</text>
</comment>
<comment type="subcellular location">
    <subcellularLocation>
        <location evidence="3">Nucleus</location>
    </subcellularLocation>
    <subcellularLocation>
        <location evidence="2">Cytoplasm</location>
        <location evidence="2">P-body</location>
    </subcellularLocation>
    <subcellularLocation>
        <location evidence="3">Cytoplasm</location>
        <location evidence="3">Cytoplasmic ribonucleoprotein granule</location>
    </subcellularLocation>
    <text evidence="2 3">NANOS2 promotes its localization to P-body (By similarity). Recruited to cytoplasmic ribonucleoprotein membraneless compartments by CAPRIN1, promoting deadenylation of mRNAs (By similarity).</text>
</comment>
<comment type="similarity">
    <text evidence="5">Belongs to the CAF1 family.</text>
</comment>
<protein>
    <recommendedName>
        <fullName>CCR4-NOT transcription complex subunit 7</fullName>
        <ecNumber>3.1.13.4</ecNumber>
    </recommendedName>
    <alternativeName>
        <fullName>CCR4-associated factor 1</fullName>
        <shortName>CAF-1</shortName>
    </alternativeName>
</protein>
<keyword id="KW-0963">Cytoplasm</keyword>
<keyword id="KW-0269">Exonuclease</keyword>
<keyword id="KW-0378">Hydrolase</keyword>
<keyword id="KW-0460">Magnesium</keyword>
<keyword id="KW-0479">Metal-binding</keyword>
<keyword id="KW-0540">Nuclease</keyword>
<keyword id="KW-0539">Nucleus</keyword>
<keyword id="KW-1185">Reference proteome</keyword>
<keyword id="KW-0678">Repressor</keyword>
<keyword id="KW-0694">RNA-binding</keyword>
<keyword id="KW-0943">RNA-mediated gene silencing</keyword>
<keyword id="KW-0804">Transcription</keyword>
<keyword id="KW-0805">Transcription regulation</keyword>
<keyword id="KW-0810">Translation regulation</keyword>
<accession>Q3ZC01</accession>
<dbReference type="EC" id="3.1.13.4"/>
<dbReference type="EMBL" id="BC103000">
    <property type="protein sequence ID" value="AAI03001.1"/>
    <property type="molecule type" value="mRNA"/>
</dbReference>
<dbReference type="RefSeq" id="NP_001029484.1">
    <property type="nucleotide sequence ID" value="NM_001034312.1"/>
</dbReference>
<dbReference type="RefSeq" id="XP_010818548.1">
    <property type="nucleotide sequence ID" value="XM_010820246.3"/>
</dbReference>
<dbReference type="RefSeq" id="XP_059738162.1">
    <property type="nucleotide sequence ID" value="XM_059882179.1"/>
</dbReference>
<dbReference type="SMR" id="Q3ZC01"/>
<dbReference type="FunCoup" id="Q3ZC01">
    <property type="interactions" value="5055"/>
</dbReference>
<dbReference type="STRING" id="9913.ENSBTAP00000024009"/>
<dbReference type="PaxDb" id="9913-ENSBTAP00000024009"/>
<dbReference type="Ensembl" id="ENSBTAT00000024009.5">
    <property type="protein sequence ID" value="ENSBTAP00000024009.4"/>
    <property type="gene ID" value="ENSBTAG00000018036.5"/>
</dbReference>
<dbReference type="GeneID" id="508055"/>
<dbReference type="KEGG" id="bta:508055"/>
<dbReference type="CTD" id="29883"/>
<dbReference type="VEuPathDB" id="HostDB:ENSBTAG00000018036"/>
<dbReference type="VGNC" id="VGNC:27522">
    <property type="gene designation" value="CNOT7"/>
</dbReference>
<dbReference type="eggNOG" id="KOG0304">
    <property type="taxonomic scope" value="Eukaryota"/>
</dbReference>
<dbReference type="GeneTree" id="ENSGT00390000000080"/>
<dbReference type="HOGENOM" id="CLU_027974_0_1_1"/>
<dbReference type="InParanoid" id="Q3ZC01"/>
<dbReference type="OMA" id="IKFMMRA"/>
<dbReference type="OrthoDB" id="1164111at2759"/>
<dbReference type="TreeFam" id="TF314185"/>
<dbReference type="Reactome" id="R-BTA-429947">
    <property type="pathway name" value="Deadenylation of mRNA"/>
</dbReference>
<dbReference type="Reactome" id="R-BTA-6804115">
    <property type="pathway name" value="TP53 regulates transcription of additional cell cycle genes whose exact role in the p53 pathway remain uncertain"/>
</dbReference>
<dbReference type="Proteomes" id="UP000009136">
    <property type="component" value="Chromosome 27"/>
</dbReference>
<dbReference type="Bgee" id="ENSBTAG00000018036">
    <property type="expression patterns" value="Expressed in oocyte and 106 other cell types or tissues"/>
</dbReference>
<dbReference type="GO" id="GO:0030014">
    <property type="term" value="C:CCR4-NOT complex"/>
    <property type="evidence" value="ECO:0000250"/>
    <property type="project" value="UniProtKB"/>
</dbReference>
<dbReference type="GO" id="GO:0030015">
    <property type="term" value="C:CCR4-NOT core complex"/>
    <property type="evidence" value="ECO:0000318"/>
    <property type="project" value="GO_Central"/>
</dbReference>
<dbReference type="GO" id="GO:0016607">
    <property type="term" value="C:nuclear speck"/>
    <property type="evidence" value="ECO:0007669"/>
    <property type="project" value="Ensembl"/>
</dbReference>
<dbReference type="GO" id="GO:0000932">
    <property type="term" value="C:P-body"/>
    <property type="evidence" value="ECO:0000250"/>
    <property type="project" value="UniProtKB"/>
</dbReference>
<dbReference type="GO" id="GO:0000175">
    <property type="term" value="F:3'-5'-RNA exonuclease activity"/>
    <property type="evidence" value="ECO:0000250"/>
    <property type="project" value="UniProtKB"/>
</dbReference>
<dbReference type="GO" id="GO:0140297">
    <property type="term" value="F:DNA-binding transcription factor binding"/>
    <property type="evidence" value="ECO:0007669"/>
    <property type="project" value="Ensembl"/>
</dbReference>
<dbReference type="GO" id="GO:0046872">
    <property type="term" value="F:metal ion binding"/>
    <property type="evidence" value="ECO:0007669"/>
    <property type="project" value="UniProtKB-KW"/>
</dbReference>
<dbReference type="GO" id="GO:0034584">
    <property type="term" value="F:piRNA binding"/>
    <property type="evidence" value="ECO:0007669"/>
    <property type="project" value="Ensembl"/>
</dbReference>
<dbReference type="GO" id="GO:0004535">
    <property type="term" value="F:poly(A)-specific ribonuclease activity"/>
    <property type="evidence" value="ECO:0000250"/>
    <property type="project" value="UniProtKB"/>
</dbReference>
<dbReference type="GO" id="GO:0004532">
    <property type="term" value="F:RNA exonuclease activity"/>
    <property type="evidence" value="ECO:0000250"/>
    <property type="project" value="UniProtKB"/>
</dbReference>
<dbReference type="GO" id="GO:0003714">
    <property type="term" value="F:transcription corepressor activity"/>
    <property type="evidence" value="ECO:0007669"/>
    <property type="project" value="Ensembl"/>
</dbReference>
<dbReference type="GO" id="GO:0000290">
    <property type="term" value="P:deadenylation-dependent decapping of nuclear-transcribed mRNA"/>
    <property type="evidence" value="ECO:0007669"/>
    <property type="project" value="Ensembl"/>
</dbReference>
<dbReference type="GO" id="GO:0051607">
    <property type="term" value="P:defense response to virus"/>
    <property type="evidence" value="ECO:0007669"/>
    <property type="project" value="Ensembl"/>
</dbReference>
<dbReference type="GO" id="GO:0035279">
    <property type="term" value="P:miRNA-mediated gene silencing by mRNA destabilization"/>
    <property type="evidence" value="ECO:0000250"/>
    <property type="project" value="UniProtKB"/>
</dbReference>
<dbReference type="GO" id="GO:0008285">
    <property type="term" value="P:negative regulation of cell population proliferation"/>
    <property type="evidence" value="ECO:0000250"/>
    <property type="project" value="UniProtKB"/>
</dbReference>
<dbReference type="GO" id="GO:0060339">
    <property type="term" value="P:negative regulation of type I interferon-mediated signaling pathway"/>
    <property type="evidence" value="ECO:0007669"/>
    <property type="project" value="Ensembl"/>
</dbReference>
<dbReference type="GO" id="GO:0000288">
    <property type="term" value="P:nuclear-transcribed mRNA catabolic process, deadenylation-dependent decay"/>
    <property type="evidence" value="ECO:0000318"/>
    <property type="project" value="GO_Central"/>
</dbReference>
<dbReference type="GO" id="GO:0000289">
    <property type="term" value="P:nuclear-transcribed mRNA poly(A) tail shortening"/>
    <property type="evidence" value="ECO:0007669"/>
    <property type="project" value="Ensembl"/>
</dbReference>
<dbReference type="GO" id="GO:0033962">
    <property type="term" value="P:P-body assembly"/>
    <property type="evidence" value="ECO:0007669"/>
    <property type="project" value="Ensembl"/>
</dbReference>
<dbReference type="GO" id="GO:0140991">
    <property type="term" value="P:piRNA-mediated gene silencing by mRNA destabilization"/>
    <property type="evidence" value="ECO:0007669"/>
    <property type="project" value="Ensembl"/>
</dbReference>
<dbReference type="GO" id="GO:0008284">
    <property type="term" value="P:positive regulation of cell population proliferation"/>
    <property type="evidence" value="ECO:0000250"/>
    <property type="project" value="UniProtKB"/>
</dbReference>
<dbReference type="GO" id="GO:1900153">
    <property type="term" value="P:positive regulation of nuclear-transcribed mRNA catabolic process, deadenylation-dependent decay"/>
    <property type="evidence" value="ECO:0000250"/>
    <property type="project" value="UniProtKB"/>
</dbReference>
<dbReference type="GO" id="GO:0060213">
    <property type="term" value="P:positive regulation of nuclear-transcribed mRNA poly(A) tail shortening"/>
    <property type="evidence" value="ECO:0000250"/>
    <property type="project" value="UniProtKB"/>
</dbReference>
<dbReference type="GO" id="GO:0045944">
    <property type="term" value="P:positive regulation of transcription by RNA polymerase II"/>
    <property type="evidence" value="ECO:0007669"/>
    <property type="project" value="Ensembl"/>
</dbReference>
<dbReference type="GO" id="GO:0045070">
    <property type="term" value="P:positive regulation of viral genome replication"/>
    <property type="evidence" value="ECO:0007669"/>
    <property type="project" value="Ensembl"/>
</dbReference>
<dbReference type="GO" id="GO:0006417">
    <property type="term" value="P:regulation of translation"/>
    <property type="evidence" value="ECO:0007669"/>
    <property type="project" value="UniProtKB-KW"/>
</dbReference>
<dbReference type="GO" id="GO:0031047">
    <property type="term" value="P:regulatory ncRNA-mediated gene silencing"/>
    <property type="evidence" value="ECO:0000250"/>
    <property type="project" value="UniProtKB"/>
</dbReference>
<dbReference type="FunFam" id="3.30.420.10:FF:000005">
    <property type="entry name" value="CCR4-NOT transcription complex subunit 7"/>
    <property type="match status" value="1"/>
</dbReference>
<dbReference type="Gene3D" id="3.30.420.10">
    <property type="entry name" value="Ribonuclease H-like superfamily/Ribonuclease H"/>
    <property type="match status" value="1"/>
</dbReference>
<dbReference type="InterPro" id="IPR039637">
    <property type="entry name" value="CNOT7/CNOT8/Pop2"/>
</dbReference>
<dbReference type="InterPro" id="IPR006941">
    <property type="entry name" value="RNase_CAF1"/>
</dbReference>
<dbReference type="InterPro" id="IPR012337">
    <property type="entry name" value="RNaseH-like_sf"/>
</dbReference>
<dbReference type="InterPro" id="IPR036397">
    <property type="entry name" value="RNaseH_sf"/>
</dbReference>
<dbReference type="PANTHER" id="PTHR10797">
    <property type="entry name" value="CCR4-NOT TRANSCRIPTION COMPLEX SUBUNIT"/>
    <property type="match status" value="1"/>
</dbReference>
<dbReference type="Pfam" id="PF04857">
    <property type="entry name" value="CAF1"/>
    <property type="match status" value="2"/>
</dbReference>
<dbReference type="SUPFAM" id="SSF53098">
    <property type="entry name" value="Ribonuclease H-like"/>
    <property type="match status" value="1"/>
</dbReference>
<gene>
    <name type="primary">CNOT7</name>
    <name type="synonym">CAF1</name>
</gene>